<accession>Q5RE16</accession>
<dbReference type="EMBL" id="CR857723">
    <property type="protein sequence ID" value="CAH89991.1"/>
    <property type="molecule type" value="mRNA"/>
</dbReference>
<dbReference type="RefSeq" id="NP_001124943.1">
    <property type="nucleotide sequence ID" value="NM_001131471.1"/>
</dbReference>
<dbReference type="SMR" id="Q5RE16"/>
<dbReference type="FunCoup" id="Q5RE16">
    <property type="interactions" value="1007"/>
</dbReference>
<dbReference type="STRING" id="9601.ENSPPYP00000007251"/>
<dbReference type="Ensembl" id="ENSPPYT00000007550.2">
    <property type="protein sequence ID" value="ENSPPYP00000007250.1"/>
    <property type="gene ID" value="ENSPPYG00000006398.2"/>
</dbReference>
<dbReference type="GeneID" id="100171815"/>
<dbReference type="KEGG" id="pon:100171815"/>
<dbReference type="CTD" id="55142"/>
<dbReference type="GeneTree" id="ENSGT00390000004927"/>
<dbReference type="HOGENOM" id="CLU_096512_1_0_1"/>
<dbReference type="InParanoid" id="Q5RE16"/>
<dbReference type="OrthoDB" id="2436605at2759"/>
<dbReference type="Proteomes" id="UP000001595">
    <property type="component" value="Chromosome 15"/>
</dbReference>
<dbReference type="GO" id="GO:0005813">
    <property type="term" value="C:centrosome"/>
    <property type="evidence" value="ECO:0000250"/>
    <property type="project" value="UniProtKB"/>
</dbReference>
<dbReference type="GO" id="GO:0005737">
    <property type="term" value="C:cytoplasm"/>
    <property type="evidence" value="ECO:0007669"/>
    <property type="project" value="UniProtKB-KW"/>
</dbReference>
<dbReference type="GO" id="GO:0070652">
    <property type="term" value="C:HAUS complex"/>
    <property type="evidence" value="ECO:0000250"/>
    <property type="project" value="UniProtKB"/>
</dbReference>
<dbReference type="GO" id="GO:1990498">
    <property type="term" value="C:mitotic spindle microtubule"/>
    <property type="evidence" value="ECO:0000250"/>
    <property type="project" value="UniProtKB"/>
</dbReference>
<dbReference type="GO" id="GO:0051301">
    <property type="term" value="P:cell division"/>
    <property type="evidence" value="ECO:0007669"/>
    <property type="project" value="UniProtKB-KW"/>
</dbReference>
<dbReference type="GO" id="GO:0007098">
    <property type="term" value="P:centrosome cycle"/>
    <property type="evidence" value="ECO:0000250"/>
    <property type="project" value="UniProtKB"/>
</dbReference>
<dbReference type="GO" id="GO:0007020">
    <property type="term" value="P:microtubule nucleation"/>
    <property type="evidence" value="ECO:0007669"/>
    <property type="project" value="TreeGrafter"/>
</dbReference>
<dbReference type="GO" id="GO:0051225">
    <property type="term" value="P:spindle assembly"/>
    <property type="evidence" value="ECO:0000250"/>
    <property type="project" value="UniProtKB"/>
</dbReference>
<dbReference type="InterPro" id="IPR028346">
    <property type="entry name" value="HAUS2"/>
</dbReference>
<dbReference type="InterPro" id="IPR026242">
    <property type="entry name" value="HAUS2_metazoa"/>
</dbReference>
<dbReference type="PANTHER" id="PTHR16039">
    <property type="entry name" value="HAUS AUGMIN-LIKE COMPLEX SUBUNIT 2"/>
    <property type="match status" value="1"/>
</dbReference>
<dbReference type="PANTHER" id="PTHR16039:SF1">
    <property type="entry name" value="HAUS AUGMIN-LIKE COMPLEX SUBUNIT 2"/>
    <property type="match status" value="1"/>
</dbReference>
<dbReference type="Pfam" id="PF15003">
    <property type="entry name" value="HAUS2"/>
    <property type="match status" value="1"/>
</dbReference>
<dbReference type="PRINTS" id="PR02088">
    <property type="entry name" value="HAUSAUGMINL2"/>
</dbReference>
<gene>
    <name type="primary">HAUS2</name>
    <name type="synonym">CEP27</name>
</gene>
<name>HAUS2_PONAB</name>
<proteinExistence type="evidence at transcript level"/>
<protein>
    <recommendedName>
        <fullName>HAUS augmin-like complex subunit 2</fullName>
    </recommendedName>
    <alternativeName>
        <fullName>Centrosomal protein of 27 kDa</fullName>
        <shortName>Cep27</shortName>
    </alternativeName>
</protein>
<keyword id="KW-0131">Cell cycle</keyword>
<keyword id="KW-0132">Cell division</keyword>
<keyword id="KW-0175">Coiled coil</keyword>
<keyword id="KW-0963">Cytoplasm</keyword>
<keyword id="KW-0206">Cytoskeleton</keyword>
<keyword id="KW-0493">Microtubule</keyword>
<keyword id="KW-0498">Mitosis</keyword>
<keyword id="KW-1185">Reference proteome</keyword>
<evidence type="ECO:0000250" key="1">
    <source>
        <dbReference type="UniProtKB" id="Q9NVX0"/>
    </source>
</evidence>
<evidence type="ECO:0000255" key="2"/>
<evidence type="ECO:0000305" key="3"/>
<reference key="1">
    <citation type="submission" date="2004-11" db="EMBL/GenBank/DDBJ databases">
        <authorList>
            <consortium name="The German cDNA consortium"/>
        </authorList>
    </citation>
    <scope>NUCLEOTIDE SEQUENCE [LARGE SCALE MRNA]</scope>
    <source>
        <tissue>Kidney</tissue>
    </source>
</reference>
<sequence length="204" mass="23272">MAAANPWDPASAPNGAGLVLGHFIASGMVNQKNLEIELLKLEKDTADVVHPFFLAQKCHTLQSMNNHLEAVLKEKRSLRQRLLKPMCQENLPIEAVYHRYMVHLLELAVTFIERLETHLETIRNIPHLAANLKKMNQALAKMDILVTETEELAENILKWRKQQNEVSSCIPKILAEESYLYKHDIIMPPLPFTSKVHVQTINAK</sequence>
<organism>
    <name type="scientific">Pongo abelii</name>
    <name type="common">Sumatran orangutan</name>
    <name type="synonym">Pongo pygmaeus abelii</name>
    <dbReference type="NCBI Taxonomy" id="9601"/>
    <lineage>
        <taxon>Eukaryota</taxon>
        <taxon>Metazoa</taxon>
        <taxon>Chordata</taxon>
        <taxon>Craniata</taxon>
        <taxon>Vertebrata</taxon>
        <taxon>Euteleostomi</taxon>
        <taxon>Mammalia</taxon>
        <taxon>Eutheria</taxon>
        <taxon>Euarchontoglires</taxon>
        <taxon>Primates</taxon>
        <taxon>Haplorrhini</taxon>
        <taxon>Catarrhini</taxon>
        <taxon>Hominidae</taxon>
        <taxon>Pongo</taxon>
    </lineage>
</organism>
<comment type="subunit">
    <text evidence="1">Component of the HAUS augmin-like complex. The complex interacts with the gamma-tubulin ring complex and this interaction is required for spindle assembly (By similarity). Interacts with EML3 (phosphorylated form) (By similarity).</text>
</comment>
<comment type="subcellular location">
    <subcellularLocation>
        <location evidence="1">Cytoplasm</location>
        <location evidence="1">Cytoskeleton</location>
        <location evidence="1">Microtubule organizing center</location>
        <location evidence="1">Centrosome</location>
    </subcellularLocation>
    <subcellularLocation>
        <location evidence="1">Cytoplasm</location>
        <location evidence="1">Cytoskeleton</location>
        <location evidence="1">Spindle</location>
    </subcellularLocation>
    <text evidence="1">Localizes to interphase centrosomes and to mitotic spindle microtubules.</text>
</comment>
<comment type="similarity">
    <text evidence="3">Belongs to the HAUS2 family.</text>
</comment>
<feature type="chain" id="PRO_0000089486" description="HAUS augmin-like complex subunit 2">
    <location>
        <begin position="1"/>
        <end position="204"/>
    </location>
</feature>
<feature type="coiled-coil region" evidence="2">
    <location>
        <begin position="54"/>
        <end position="84"/>
    </location>
</feature>